<evidence type="ECO:0000255" key="1">
    <source>
        <dbReference type="HAMAP-Rule" id="MF_00487"/>
    </source>
</evidence>
<feature type="chain" id="PRO_0000241946" description="Malate dehydrogenase">
    <location>
        <begin position="1"/>
        <end position="307"/>
    </location>
</feature>
<feature type="active site" description="Proton acceptor" evidence="1">
    <location>
        <position position="174"/>
    </location>
</feature>
<feature type="binding site" evidence="1">
    <location>
        <begin position="8"/>
        <end position="13"/>
    </location>
    <ligand>
        <name>NAD(+)</name>
        <dbReference type="ChEBI" id="CHEBI:57540"/>
    </ligand>
</feature>
<feature type="binding site" evidence="1">
    <location>
        <position position="32"/>
    </location>
    <ligand>
        <name>NAD(+)</name>
        <dbReference type="ChEBI" id="CHEBI:57540"/>
    </ligand>
</feature>
<feature type="binding site" evidence="1">
    <location>
        <position position="81"/>
    </location>
    <ligand>
        <name>substrate</name>
    </ligand>
</feature>
<feature type="binding site" evidence="1">
    <location>
        <position position="87"/>
    </location>
    <ligand>
        <name>substrate</name>
    </ligand>
</feature>
<feature type="binding site" evidence="1">
    <location>
        <position position="94"/>
    </location>
    <ligand>
        <name>NAD(+)</name>
        <dbReference type="ChEBI" id="CHEBI:57540"/>
    </ligand>
</feature>
<feature type="binding site" evidence="1">
    <location>
        <begin position="117"/>
        <end position="119"/>
    </location>
    <ligand>
        <name>NAD(+)</name>
        <dbReference type="ChEBI" id="CHEBI:57540"/>
    </ligand>
</feature>
<feature type="binding site" evidence="1">
    <location>
        <position position="119"/>
    </location>
    <ligand>
        <name>substrate</name>
    </ligand>
</feature>
<feature type="binding site" evidence="1">
    <location>
        <position position="150"/>
    </location>
    <ligand>
        <name>substrate</name>
    </ligand>
</feature>
<gene>
    <name evidence="1" type="primary">mdh</name>
    <name type="ordered locus">cbdbA409</name>
</gene>
<comment type="function">
    <text evidence="1">Catalyzes the reversible oxidation of malate to oxaloacetate.</text>
</comment>
<comment type="catalytic activity">
    <reaction evidence="1">
        <text>(S)-malate + NAD(+) = oxaloacetate + NADH + H(+)</text>
        <dbReference type="Rhea" id="RHEA:21432"/>
        <dbReference type="ChEBI" id="CHEBI:15378"/>
        <dbReference type="ChEBI" id="CHEBI:15589"/>
        <dbReference type="ChEBI" id="CHEBI:16452"/>
        <dbReference type="ChEBI" id="CHEBI:57540"/>
        <dbReference type="ChEBI" id="CHEBI:57945"/>
        <dbReference type="EC" id="1.1.1.37"/>
    </reaction>
</comment>
<comment type="similarity">
    <text evidence="1">Belongs to the LDH/MDH superfamily. MDH type 3 family.</text>
</comment>
<protein>
    <recommendedName>
        <fullName evidence="1">Malate dehydrogenase</fullName>
        <ecNumber evidence="1">1.1.1.37</ecNumber>
    </recommendedName>
</protein>
<organism>
    <name type="scientific">Dehalococcoides mccartyi (strain CBDB1)</name>
    <dbReference type="NCBI Taxonomy" id="255470"/>
    <lineage>
        <taxon>Bacteria</taxon>
        <taxon>Bacillati</taxon>
        <taxon>Chloroflexota</taxon>
        <taxon>Dehalococcoidia</taxon>
        <taxon>Dehalococcoidales</taxon>
        <taxon>Dehalococcoidaceae</taxon>
        <taxon>Dehalococcoides</taxon>
    </lineage>
</organism>
<keyword id="KW-0520">NAD</keyword>
<keyword id="KW-0560">Oxidoreductase</keyword>
<keyword id="KW-0816">Tricarboxylic acid cycle</keyword>
<accession>Q3ZZJ7</accession>
<name>MDH_DEHMC</name>
<dbReference type="EC" id="1.1.1.37" evidence="1"/>
<dbReference type="EMBL" id="AJ965256">
    <property type="protein sequence ID" value="CAI82616.1"/>
    <property type="molecule type" value="Genomic_DNA"/>
</dbReference>
<dbReference type="RefSeq" id="WP_011308973.1">
    <property type="nucleotide sequence ID" value="NC_007356.1"/>
</dbReference>
<dbReference type="SMR" id="Q3ZZJ7"/>
<dbReference type="KEGG" id="deh:cbdbA409"/>
<dbReference type="HOGENOM" id="CLU_045401_2_1_0"/>
<dbReference type="Proteomes" id="UP000000433">
    <property type="component" value="Chromosome"/>
</dbReference>
<dbReference type="GO" id="GO:0004459">
    <property type="term" value="F:L-lactate dehydrogenase activity"/>
    <property type="evidence" value="ECO:0007669"/>
    <property type="project" value="TreeGrafter"/>
</dbReference>
<dbReference type="GO" id="GO:0030060">
    <property type="term" value="F:L-malate dehydrogenase (NAD+) activity"/>
    <property type="evidence" value="ECO:0007669"/>
    <property type="project" value="UniProtKB-UniRule"/>
</dbReference>
<dbReference type="GO" id="GO:0006089">
    <property type="term" value="P:lactate metabolic process"/>
    <property type="evidence" value="ECO:0007669"/>
    <property type="project" value="TreeGrafter"/>
</dbReference>
<dbReference type="GO" id="GO:0006099">
    <property type="term" value="P:tricarboxylic acid cycle"/>
    <property type="evidence" value="ECO:0007669"/>
    <property type="project" value="UniProtKB-UniRule"/>
</dbReference>
<dbReference type="CDD" id="cd01339">
    <property type="entry name" value="LDH-like_MDH"/>
    <property type="match status" value="1"/>
</dbReference>
<dbReference type="FunFam" id="3.40.50.720:FF:000018">
    <property type="entry name" value="Malate dehydrogenase"/>
    <property type="match status" value="1"/>
</dbReference>
<dbReference type="Gene3D" id="3.90.110.10">
    <property type="entry name" value="Lactate dehydrogenase/glycoside hydrolase, family 4, C-terminal"/>
    <property type="match status" value="1"/>
</dbReference>
<dbReference type="Gene3D" id="3.40.50.720">
    <property type="entry name" value="NAD(P)-binding Rossmann-like Domain"/>
    <property type="match status" value="1"/>
</dbReference>
<dbReference type="HAMAP" id="MF_00487">
    <property type="entry name" value="Malate_dehydrog_3"/>
    <property type="match status" value="1"/>
</dbReference>
<dbReference type="InterPro" id="IPR001557">
    <property type="entry name" value="L-lactate/malate_DH"/>
</dbReference>
<dbReference type="InterPro" id="IPR022383">
    <property type="entry name" value="Lactate/malate_DH_C"/>
</dbReference>
<dbReference type="InterPro" id="IPR001236">
    <property type="entry name" value="Lactate/malate_DH_N"/>
</dbReference>
<dbReference type="InterPro" id="IPR015955">
    <property type="entry name" value="Lactate_DH/Glyco_Ohase_4_C"/>
</dbReference>
<dbReference type="InterPro" id="IPR011275">
    <property type="entry name" value="Malate_DH_type3"/>
</dbReference>
<dbReference type="InterPro" id="IPR036291">
    <property type="entry name" value="NAD(P)-bd_dom_sf"/>
</dbReference>
<dbReference type="NCBIfam" id="TIGR01763">
    <property type="entry name" value="MalateDH_bact"/>
    <property type="match status" value="1"/>
</dbReference>
<dbReference type="NCBIfam" id="NF004863">
    <property type="entry name" value="PRK06223.1"/>
    <property type="match status" value="1"/>
</dbReference>
<dbReference type="PANTHER" id="PTHR43128">
    <property type="entry name" value="L-2-HYDROXYCARBOXYLATE DEHYDROGENASE (NAD(P)(+))"/>
    <property type="match status" value="1"/>
</dbReference>
<dbReference type="PANTHER" id="PTHR43128:SF16">
    <property type="entry name" value="L-LACTATE DEHYDROGENASE"/>
    <property type="match status" value="1"/>
</dbReference>
<dbReference type="Pfam" id="PF02866">
    <property type="entry name" value="Ldh_1_C"/>
    <property type="match status" value="1"/>
</dbReference>
<dbReference type="Pfam" id="PF00056">
    <property type="entry name" value="Ldh_1_N"/>
    <property type="match status" value="1"/>
</dbReference>
<dbReference type="PIRSF" id="PIRSF000102">
    <property type="entry name" value="Lac_mal_DH"/>
    <property type="match status" value="1"/>
</dbReference>
<dbReference type="PRINTS" id="PR00086">
    <property type="entry name" value="LLDHDRGNASE"/>
</dbReference>
<dbReference type="SUPFAM" id="SSF56327">
    <property type="entry name" value="LDH C-terminal domain-like"/>
    <property type="match status" value="1"/>
</dbReference>
<dbReference type="SUPFAM" id="SSF51735">
    <property type="entry name" value="NAD(P)-binding Rossmann-fold domains"/>
    <property type="match status" value="1"/>
</dbReference>
<sequence length="307" mass="32023">MPKISVIGAGNVGATLAQRLIEKDFADVVMLDVVEGIPQGKALDISQSASVLGFRHTITGSNDYAQTAGSEIVVITAGIARKPGMTREELLAINQKIMTDVVSNCLKYSPEATLVVVSNPVDTMTYLAWKLSGLPRKRVVGLSGVLDGGRLATFVARELGVNPSAVSPCVMGEHGGSMVVMSRFTLVNGKPLSELVSPEKADELAKRAVNGGAEIVAFLKTGSAFYAPSASVAAMVEAIFLGSGKVMNCAAVLDGEYGLRNIVLGVPVKLGKGGIKEIITLPLDGQENARLQASAEMVKVQIASLSL</sequence>
<proteinExistence type="inferred from homology"/>
<reference key="1">
    <citation type="journal article" date="2005" name="Nat. Biotechnol.">
        <title>Genome sequence of the chlorinated compound-respiring bacterium Dehalococcoides species strain CBDB1.</title>
        <authorList>
            <person name="Kube M."/>
            <person name="Beck A."/>
            <person name="Zinder S.H."/>
            <person name="Kuhl H."/>
            <person name="Reinhardt R."/>
            <person name="Adrian L."/>
        </authorList>
    </citation>
    <scope>NUCLEOTIDE SEQUENCE [LARGE SCALE GENOMIC DNA]</scope>
    <source>
        <strain>CBDB1</strain>
    </source>
</reference>